<evidence type="ECO:0000255" key="1">
    <source>
        <dbReference type="HAMAP-Rule" id="MF_01973"/>
    </source>
</evidence>
<evidence type="ECO:0000255" key="2">
    <source>
        <dbReference type="PROSITE-ProRule" id="PRU01122"/>
    </source>
</evidence>
<evidence type="ECO:0000255" key="3">
    <source>
        <dbReference type="PROSITE-ProRule" id="PRU01123"/>
    </source>
</evidence>
<evidence type="ECO:0000305" key="4"/>
<name>LON_RICCN</name>
<proteinExistence type="inferred from homology"/>
<feature type="chain" id="PRO_0000280892" description="Lon protease">
    <location>
        <begin position="1"/>
        <end position="778"/>
    </location>
</feature>
<feature type="domain" description="Lon N-terminal" evidence="3">
    <location>
        <begin position="6"/>
        <end position="207"/>
    </location>
</feature>
<feature type="domain" description="Lon proteolytic" evidence="2">
    <location>
        <begin position="592"/>
        <end position="773"/>
    </location>
</feature>
<feature type="active site" evidence="1">
    <location>
        <position position="679"/>
    </location>
</feature>
<feature type="active site" evidence="1">
    <location>
        <position position="722"/>
    </location>
</feature>
<feature type="binding site" evidence="1">
    <location>
        <begin position="356"/>
        <end position="363"/>
    </location>
    <ligand>
        <name>ATP</name>
        <dbReference type="ChEBI" id="CHEBI:30616"/>
    </ligand>
</feature>
<dbReference type="EC" id="3.4.21.53" evidence="1"/>
<dbReference type="EMBL" id="AE006914">
    <property type="protein sequence ID" value="AAL03167.1"/>
    <property type="status" value="ALT_INIT"/>
    <property type="molecule type" value="Genomic_DNA"/>
</dbReference>
<dbReference type="PIR" id="E97778">
    <property type="entry name" value="E97778"/>
</dbReference>
<dbReference type="RefSeq" id="WP_016830768.1">
    <property type="nucleotide sequence ID" value="NC_003103.1"/>
</dbReference>
<dbReference type="SMR" id="Q92HZ1"/>
<dbReference type="MEROPS" id="S16.001"/>
<dbReference type="GeneID" id="927716"/>
<dbReference type="KEGG" id="rco:RC0629"/>
<dbReference type="PATRIC" id="fig|272944.4.peg.715"/>
<dbReference type="HOGENOM" id="CLU_004109_4_3_5"/>
<dbReference type="Proteomes" id="UP000000816">
    <property type="component" value="Chromosome"/>
</dbReference>
<dbReference type="GO" id="GO:0005737">
    <property type="term" value="C:cytoplasm"/>
    <property type="evidence" value="ECO:0007669"/>
    <property type="project" value="UniProtKB-SubCell"/>
</dbReference>
<dbReference type="GO" id="GO:0005524">
    <property type="term" value="F:ATP binding"/>
    <property type="evidence" value="ECO:0007669"/>
    <property type="project" value="UniProtKB-UniRule"/>
</dbReference>
<dbReference type="GO" id="GO:0016887">
    <property type="term" value="F:ATP hydrolysis activity"/>
    <property type="evidence" value="ECO:0007669"/>
    <property type="project" value="UniProtKB-UniRule"/>
</dbReference>
<dbReference type="GO" id="GO:0004176">
    <property type="term" value="F:ATP-dependent peptidase activity"/>
    <property type="evidence" value="ECO:0007669"/>
    <property type="project" value="UniProtKB-UniRule"/>
</dbReference>
<dbReference type="GO" id="GO:0043565">
    <property type="term" value="F:sequence-specific DNA binding"/>
    <property type="evidence" value="ECO:0007669"/>
    <property type="project" value="UniProtKB-UniRule"/>
</dbReference>
<dbReference type="GO" id="GO:0004252">
    <property type="term" value="F:serine-type endopeptidase activity"/>
    <property type="evidence" value="ECO:0007669"/>
    <property type="project" value="UniProtKB-UniRule"/>
</dbReference>
<dbReference type="GO" id="GO:0034605">
    <property type="term" value="P:cellular response to heat"/>
    <property type="evidence" value="ECO:0007669"/>
    <property type="project" value="UniProtKB-UniRule"/>
</dbReference>
<dbReference type="GO" id="GO:0006515">
    <property type="term" value="P:protein quality control for misfolded or incompletely synthesized proteins"/>
    <property type="evidence" value="ECO:0007669"/>
    <property type="project" value="UniProtKB-UniRule"/>
</dbReference>
<dbReference type="CDD" id="cd19500">
    <property type="entry name" value="RecA-like_Lon"/>
    <property type="match status" value="1"/>
</dbReference>
<dbReference type="FunFam" id="1.20.5.5270:FF:000002">
    <property type="entry name" value="Lon protease homolog"/>
    <property type="match status" value="1"/>
</dbReference>
<dbReference type="FunFam" id="3.40.50.300:FF:000021">
    <property type="entry name" value="Lon protease homolog"/>
    <property type="match status" value="1"/>
</dbReference>
<dbReference type="Gene3D" id="1.10.8.60">
    <property type="match status" value="1"/>
</dbReference>
<dbReference type="Gene3D" id="1.20.5.5270">
    <property type="match status" value="1"/>
</dbReference>
<dbReference type="Gene3D" id="1.20.58.1480">
    <property type="match status" value="1"/>
</dbReference>
<dbReference type="Gene3D" id="3.30.230.10">
    <property type="match status" value="1"/>
</dbReference>
<dbReference type="Gene3D" id="2.30.130.40">
    <property type="entry name" value="LON domain-like"/>
    <property type="match status" value="1"/>
</dbReference>
<dbReference type="Gene3D" id="3.40.50.300">
    <property type="entry name" value="P-loop containing nucleotide triphosphate hydrolases"/>
    <property type="match status" value="1"/>
</dbReference>
<dbReference type="HAMAP" id="MF_01973">
    <property type="entry name" value="lon_bact"/>
    <property type="match status" value="1"/>
</dbReference>
<dbReference type="InterPro" id="IPR003593">
    <property type="entry name" value="AAA+_ATPase"/>
</dbReference>
<dbReference type="InterPro" id="IPR003959">
    <property type="entry name" value="ATPase_AAA_core"/>
</dbReference>
<dbReference type="InterPro" id="IPR027543">
    <property type="entry name" value="Lon_bac"/>
</dbReference>
<dbReference type="InterPro" id="IPR004815">
    <property type="entry name" value="Lon_bac/euk-typ"/>
</dbReference>
<dbReference type="InterPro" id="IPR054594">
    <property type="entry name" value="Lon_lid"/>
</dbReference>
<dbReference type="InterPro" id="IPR008269">
    <property type="entry name" value="Lon_proteolytic"/>
</dbReference>
<dbReference type="InterPro" id="IPR027065">
    <property type="entry name" value="Lon_Prtase"/>
</dbReference>
<dbReference type="InterPro" id="IPR003111">
    <property type="entry name" value="Lon_prtase_N"/>
</dbReference>
<dbReference type="InterPro" id="IPR046336">
    <property type="entry name" value="Lon_prtase_N_sf"/>
</dbReference>
<dbReference type="InterPro" id="IPR027417">
    <property type="entry name" value="P-loop_NTPase"/>
</dbReference>
<dbReference type="InterPro" id="IPR008268">
    <property type="entry name" value="Peptidase_S16_AS"/>
</dbReference>
<dbReference type="InterPro" id="IPR015947">
    <property type="entry name" value="PUA-like_sf"/>
</dbReference>
<dbReference type="InterPro" id="IPR020568">
    <property type="entry name" value="Ribosomal_Su5_D2-typ_SF"/>
</dbReference>
<dbReference type="InterPro" id="IPR014721">
    <property type="entry name" value="Ribsml_uS5_D2-typ_fold_subgr"/>
</dbReference>
<dbReference type="NCBIfam" id="TIGR00763">
    <property type="entry name" value="lon"/>
    <property type="match status" value="1"/>
</dbReference>
<dbReference type="NCBIfam" id="NF008053">
    <property type="entry name" value="PRK10787.1"/>
    <property type="match status" value="1"/>
</dbReference>
<dbReference type="PANTHER" id="PTHR10046">
    <property type="entry name" value="ATP DEPENDENT LON PROTEASE FAMILY MEMBER"/>
    <property type="match status" value="1"/>
</dbReference>
<dbReference type="Pfam" id="PF00004">
    <property type="entry name" value="AAA"/>
    <property type="match status" value="1"/>
</dbReference>
<dbReference type="Pfam" id="PF05362">
    <property type="entry name" value="Lon_C"/>
    <property type="match status" value="1"/>
</dbReference>
<dbReference type="Pfam" id="PF22667">
    <property type="entry name" value="Lon_lid"/>
    <property type="match status" value="1"/>
</dbReference>
<dbReference type="Pfam" id="PF02190">
    <property type="entry name" value="LON_substr_bdg"/>
    <property type="match status" value="1"/>
</dbReference>
<dbReference type="PIRSF" id="PIRSF001174">
    <property type="entry name" value="Lon_proteas"/>
    <property type="match status" value="1"/>
</dbReference>
<dbReference type="PRINTS" id="PR00830">
    <property type="entry name" value="ENDOLAPTASE"/>
</dbReference>
<dbReference type="SMART" id="SM00382">
    <property type="entry name" value="AAA"/>
    <property type="match status" value="1"/>
</dbReference>
<dbReference type="SMART" id="SM00464">
    <property type="entry name" value="LON"/>
    <property type="match status" value="1"/>
</dbReference>
<dbReference type="SUPFAM" id="SSF52540">
    <property type="entry name" value="P-loop containing nucleoside triphosphate hydrolases"/>
    <property type="match status" value="1"/>
</dbReference>
<dbReference type="SUPFAM" id="SSF88697">
    <property type="entry name" value="PUA domain-like"/>
    <property type="match status" value="1"/>
</dbReference>
<dbReference type="SUPFAM" id="SSF54211">
    <property type="entry name" value="Ribosomal protein S5 domain 2-like"/>
    <property type="match status" value="1"/>
</dbReference>
<dbReference type="PROSITE" id="PS51787">
    <property type="entry name" value="LON_N"/>
    <property type="match status" value="1"/>
</dbReference>
<dbReference type="PROSITE" id="PS51786">
    <property type="entry name" value="LON_PROTEOLYTIC"/>
    <property type="match status" value="1"/>
</dbReference>
<dbReference type="PROSITE" id="PS01046">
    <property type="entry name" value="LON_SER"/>
    <property type="match status" value="1"/>
</dbReference>
<reference key="1">
    <citation type="journal article" date="2001" name="Science">
        <title>Mechanisms of evolution in Rickettsia conorii and R. prowazekii.</title>
        <authorList>
            <person name="Ogata H."/>
            <person name="Audic S."/>
            <person name="Renesto-Audiffren P."/>
            <person name="Fournier P.-E."/>
            <person name="Barbe V."/>
            <person name="Samson D."/>
            <person name="Roux V."/>
            <person name="Cossart P."/>
            <person name="Weissenbach J."/>
            <person name="Claverie J.-M."/>
            <person name="Raoult D."/>
        </authorList>
    </citation>
    <scope>NUCLEOTIDE SEQUENCE [LARGE SCALE GENOMIC DNA]</scope>
    <source>
        <strain>ATCC VR-613 / Malish 7</strain>
    </source>
</reference>
<accession>Q92HZ1</accession>
<organism>
    <name type="scientific">Rickettsia conorii (strain ATCC VR-613 / Malish 7)</name>
    <dbReference type="NCBI Taxonomy" id="272944"/>
    <lineage>
        <taxon>Bacteria</taxon>
        <taxon>Pseudomonadati</taxon>
        <taxon>Pseudomonadota</taxon>
        <taxon>Alphaproteobacteria</taxon>
        <taxon>Rickettsiales</taxon>
        <taxon>Rickettsiaceae</taxon>
        <taxon>Rickettsieae</taxon>
        <taxon>Rickettsia</taxon>
        <taxon>spotted fever group</taxon>
    </lineage>
</organism>
<comment type="function">
    <text evidence="1">ATP-dependent serine protease that mediates the selective degradation of mutant and abnormal proteins as well as certain short-lived regulatory proteins. Required for cellular homeostasis and for survival from DNA damage and developmental changes induced by stress. Degrades polypeptides processively to yield small peptide fragments that are 5 to 10 amino acids long. Binds to DNA in a double-stranded, site-specific manner.</text>
</comment>
<comment type="catalytic activity">
    <reaction evidence="1">
        <text>Hydrolysis of proteins in presence of ATP.</text>
        <dbReference type="EC" id="3.4.21.53"/>
    </reaction>
</comment>
<comment type="subunit">
    <text evidence="1">Homohexamer. Organized in a ring with a central cavity.</text>
</comment>
<comment type="subcellular location">
    <subcellularLocation>
        <location evidence="1">Cytoplasm</location>
    </subcellularLocation>
</comment>
<comment type="induction">
    <text evidence="1">By heat shock.</text>
</comment>
<comment type="similarity">
    <text evidence="1">Belongs to the peptidase S16 family.</text>
</comment>
<comment type="sequence caution" evidence="4">
    <conflict type="erroneous initiation">
        <sequence resource="EMBL-CDS" id="AAL03167"/>
    </conflict>
</comment>
<protein>
    <recommendedName>
        <fullName evidence="1">Lon protease</fullName>
        <ecNumber evidence="1">3.4.21.53</ecNumber>
    </recommendedName>
    <alternativeName>
        <fullName evidence="1">ATP-dependent protease La</fullName>
    </alternativeName>
</protein>
<sequence length="778" mass="87000">MHKKSLPLMALRDMVVFPGVIAPIFVGRPKSLQALSHTTISEEDNSKYILVTLQKKFDQENPSTHELYNTAILAKIIQIVKLPNNTAKILIEAVARVKLSNIKGEEAFEANYEIIPDEEIFDVNNMRSLVDNAVQLFSKYAINDKKVNAEIIETINKEISNSTNFIDIINILASHLITSLEAKQHLLEETSPFKRITTVISMLNSNIVNSETEQALQKRVRKQIEKTQRDYYLHEQMKAIQKELDEDKSELADIENKIKSLKLSKEAKEKAEAELKKLRTMNQMSAESGVTRNYLETLLSLPWGKYDNSKIDINQAEKILNRDHFGLEKVKERIIEYLAVLQRSSKIRGPILCLIGPPGVGKTSLVKSIAEGMGRKYTKLALGGVRDEAEIRGHRKTYLGSMPGKILGQLKKVKTSNPVMLLDEIDKMSSDFRGDPASALLEVLDPEQNSHFVDHYLEVEYDLSNVIFIATANSHDLPRALSDRMEKIYISGYVEETKLQIARNYLVPKQFKMHKIKKDEITISETAILDLIRYYTKESGVRALEREIGALTRKALKQILADKSVKHIAIDSNHLEEFLGAKKYNFGLAEKEDQIGSTTGLAYTEVGGELLTIEALAFPGKGEIKTTGKLGDVMKESAMAAYSCFRSRATNFGLKYDNYKDFDIHIHVPAGAIPKDGPSAGCALFTTIVSLMTKIPVHRTVAMTGEITLRGNVLPIGGLKEKLLAASRGGIKTVLIPEENVKDLKDIPPNIKESLEIISVSNIDQVLKHALVGTPINK</sequence>
<gene>
    <name evidence="1" type="primary">lon</name>
    <name type="ordered locus">RC0629</name>
</gene>
<keyword id="KW-0067">ATP-binding</keyword>
<keyword id="KW-0963">Cytoplasm</keyword>
<keyword id="KW-0378">Hydrolase</keyword>
<keyword id="KW-0547">Nucleotide-binding</keyword>
<keyword id="KW-0645">Protease</keyword>
<keyword id="KW-0720">Serine protease</keyword>
<keyword id="KW-0346">Stress response</keyword>